<reference key="1">
    <citation type="journal article" date="1992" name="Virology">
        <title>The DNA sequence of equine herpesvirus-1.</title>
        <authorList>
            <person name="Telford E.A.R."/>
            <person name="Watson M.S."/>
            <person name="McBride K."/>
            <person name="Davison A.J."/>
        </authorList>
    </citation>
    <scope>NUCLEOTIDE SEQUENCE [LARGE SCALE GENOMIC DNA]</scope>
</reference>
<dbReference type="EC" id="3.1.27.-"/>
<dbReference type="EMBL" id="AY665713">
    <property type="protein sequence ID" value="AAT67276.1"/>
    <property type="molecule type" value="Genomic_DNA"/>
</dbReference>
<dbReference type="PIR" id="B36797">
    <property type="entry name" value="WZBEB3"/>
</dbReference>
<dbReference type="KEGG" id="vg:1487523"/>
<dbReference type="Proteomes" id="UP000001189">
    <property type="component" value="Segment"/>
</dbReference>
<dbReference type="GO" id="GO:0044423">
    <property type="term" value="C:virion component"/>
    <property type="evidence" value="ECO:0007669"/>
    <property type="project" value="UniProtKB-KW"/>
</dbReference>
<dbReference type="GO" id="GO:0004519">
    <property type="term" value="F:endonuclease activity"/>
    <property type="evidence" value="ECO:0007669"/>
    <property type="project" value="UniProtKB-KW"/>
</dbReference>
<dbReference type="GO" id="GO:0003723">
    <property type="term" value="F:RNA binding"/>
    <property type="evidence" value="ECO:0007669"/>
    <property type="project" value="UniProtKB-KW"/>
</dbReference>
<dbReference type="GO" id="GO:0039595">
    <property type="term" value="P:symbiont-mediated degradation of host mRNA"/>
    <property type="evidence" value="ECO:0007669"/>
    <property type="project" value="UniProtKB-KW"/>
</dbReference>
<dbReference type="GO" id="GO:0039657">
    <property type="term" value="P:symbiont-mediated suppression of host gene expression"/>
    <property type="evidence" value="ECO:0007669"/>
    <property type="project" value="UniProtKB-KW"/>
</dbReference>
<dbReference type="Gene3D" id="3.40.50.1010">
    <property type="entry name" value="5'-nuclease"/>
    <property type="match status" value="1"/>
</dbReference>
<dbReference type="InterPro" id="IPR029060">
    <property type="entry name" value="PIN-like_dom_sf"/>
</dbReference>
<dbReference type="SUPFAM" id="SSF88723">
    <property type="entry name" value="PIN domain-like"/>
    <property type="match status" value="1"/>
</dbReference>
<name>SHUT_EHV1B</name>
<evidence type="ECO:0000250" key="1"/>
<evidence type="ECO:0000256" key="2">
    <source>
        <dbReference type="SAM" id="MobiDB-lite"/>
    </source>
</evidence>
<evidence type="ECO:0000305" key="3"/>
<keyword id="KW-1132">Decay of host mRNAs by virus</keyword>
<keyword id="KW-0255">Endonuclease</keyword>
<keyword id="KW-1262">Eukaryotic host gene expression shutoff by virus</keyword>
<keyword id="KW-1190">Host gene expression shutoff by virus</keyword>
<keyword id="KW-1192">Host mRNA suppression by virus</keyword>
<keyword id="KW-0945">Host-virus interaction</keyword>
<keyword id="KW-0378">Hydrolase</keyword>
<keyword id="KW-0540">Nuclease</keyword>
<keyword id="KW-1185">Reference proteome</keyword>
<keyword id="KW-0694">RNA-binding</keyword>
<keyword id="KW-0946">Virion</keyword>
<organism>
    <name type="scientific">Equine herpesvirus 1 (strain Ab4p)</name>
    <name type="common">EHV-1</name>
    <name type="synonym">Equine abortion virus</name>
    <dbReference type="NCBI Taxonomy" id="31520"/>
    <lineage>
        <taxon>Viruses</taxon>
        <taxon>Duplodnaviria</taxon>
        <taxon>Heunggongvirae</taxon>
        <taxon>Peploviricota</taxon>
        <taxon>Herviviricetes</taxon>
        <taxon>Herpesvirales</taxon>
        <taxon>Orthoherpesviridae</taxon>
        <taxon>Alphaherpesvirinae</taxon>
        <taxon>Varicellovirus</taxon>
        <taxon>Varicellovirus equidalpha1</taxon>
        <taxon>Equid alphaherpesvirus 1</taxon>
    </lineage>
</organism>
<protein>
    <recommendedName>
        <fullName>Virion host shutoff protein</fullName>
        <shortName>Vhs</shortName>
        <ecNumber>3.1.27.-</ecNumber>
    </recommendedName>
</protein>
<comment type="function">
    <text evidence="1">Minor structural protein that acts as an endoribonuclease during lytic infection. Degrades host mRNAs in the cytoplasm by cutting them at preferred sites, including some in regions of translation initiation (By similarity).</text>
</comment>
<comment type="subcellular location">
    <subcellularLocation>
        <location evidence="3">Virion</location>
    </subcellularLocation>
</comment>
<comment type="similarity">
    <text evidence="3">Belongs to the herpesviridae VHS protein family.</text>
</comment>
<accession>P28957</accession>
<accession>Q6S6Q2</accession>
<organismHost>
    <name type="scientific">Equus caballus</name>
    <name type="common">Horse</name>
    <dbReference type="NCBI Taxonomy" id="9796"/>
</organismHost>
<sequence>MGLFGLLKYAYSNRLVKHDAITTPPGIMTPIAIDLWNVMYTLMEKFDQERNFPLDGAAVTARCFFSLLRLLLKRSYYPIFVSDRGIYGDGRVKQGAKAIVSQTMSSYGGSGRLSSACFTGDEHDTEFQEDPEENDVSVPPQDTCPPTEISAGYVEPERKCEHSSTRWSALDGAPRLSYRLCVNLIRHLGYPYVNACNLEADDVCANLYHTNTVAQIYTTDTDLILMGCDIILDIMPLFPPTLRCCDVLMDLGVTYDEFLTEFVRCHTDLHEPQTLASVQSVISSLHSPPDEDEGADMPQTPSGHSWRCPNERRVISWRRQDDHDYDSSTEDSDQSDSSEEEEECPAGKGFGYRENPAVETCKRRTRPRRSAEASGRILHLKYTSRYPPIMESAPRALVRMAPPKTRHEVLERKFVKHVVSMLTPERRGSLSIMRRLPITQEPSNFSLVHDTLKNLVSEHEIARELANMFWNHIPTPTDYNTVLVNYWDDCGHRRQWS</sequence>
<proteinExistence type="inferred from homology"/>
<gene>
    <name type="ordered locus">19</name>
</gene>
<feature type="chain" id="PRO_0000116057" description="Virion host shutoff protein">
    <location>
        <begin position="1"/>
        <end position="497"/>
    </location>
</feature>
<feature type="region of interest" description="Disordered" evidence="2">
    <location>
        <begin position="122"/>
        <end position="142"/>
    </location>
</feature>
<feature type="region of interest" description="Disordered" evidence="2">
    <location>
        <begin position="280"/>
        <end position="373"/>
    </location>
</feature>
<feature type="compositionally biased region" description="Basic and acidic residues" evidence="2">
    <location>
        <begin position="309"/>
        <end position="326"/>
    </location>
</feature>
<feature type="compositionally biased region" description="Acidic residues" evidence="2">
    <location>
        <begin position="327"/>
        <end position="344"/>
    </location>
</feature>